<reference evidence="6" key="1">
    <citation type="journal article" date="2015" name="Science">
        <title>Genetic determinants of in vivo fitness and diet responsiveness in multiple human gut Bacteroides.</title>
        <authorList>
            <person name="Wu M."/>
            <person name="McNulty N.P."/>
            <person name="Rodionov D.A."/>
            <person name="Khoroshkin M.S."/>
            <person name="Griffin N.W."/>
            <person name="Cheng J."/>
            <person name="Latreille P."/>
            <person name="Kerstetter R.A."/>
            <person name="Terrapon N."/>
            <person name="Henrissat B."/>
            <person name="Osterman A.L."/>
            <person name="Gordon J.I."/>
        </authorList>
    </citation>
    <scope>NUCLEOTIDE SEQUENCE [LARGE SCALE GENOMIC DNA]</scope>
    <source>
        <strain evidence="6">7330</strain>
    </source>
</reference>
<reference evidence="10" key="2">
    <citation type="submission" date="2016-10" db="EMBL/GenBank/DDBJ databases">
        <authorList>
            <person name="Varghese N."/>
        </authorList>
    </citation>
    <scope>NUCLEOTIDE SEQUENCE [LARGE SCALE GENOMIC DNA]</scope>
    <source>
        <strain evidence="10">KPPR-3</strain>
    </source>
</reference>
<reference evidence="12" key="3">
    <citation type="submission" date="2018-08" db="EMBL/GenBank/DDBJ databases">
        <title>A genome reference for cultivated species of the human gut microbiota.</title>
        <authorList>
            <person name="Zou Y."/>
            <person name="Xue W."/>
            <person name="Luo G."/>
        </authorList>
    </citation>
    <scope>NUCLEOTIDE SEQUENCE [LARGE SCALE GENOMIC DNA]</scope>
    <source>
        <strain evidence="8">AF24-19LB</strain>
        <strain evidence="9">AF37-12</strain>
    </source>
</reference>
<reference evidence="7" key="4">
    <citation type="journal article" date="2019" name="Nat. Med.">
        <title>A library of human gut bacterial isolates paired with longitudinal multiomics data enables mechanistic microbiome research.</title>
        <authorList>
            <person name="Poyet M."/>
            <person name="Groussin M."/>
            <person name="Gibbons S.M."/>
            <person name="Avila-Pacheco J."/>
            <person name="Jiang X."/>
            <person name="Kearney S.M."/>
            <person name="Perrotta A.R."/>
            <person name="Berdy B."/>
            <person name="Zhao S."/>
            <person name="Lieberman T.D."/>
            <person name="Swanson P.K."/>
            <person name="Smith M."/>
            <person name="Roesemann S."/>
            <person name="Alexander J.E."/>
            <person name="Rich S.A."/>
            <person name="Livny J."/>
            <person name="Vlamakis H."/>
            <person name="Clish C."/>
            <person name="Bullock K."/>
            <person name="Deik A."/>
            <person name="Scott J."/>
            <person name="Pierce K.A."/>
            <person name="Xavier R.J."/>
            <person name="Alm E.J."/>
        </authorList>
    </citation>
    <scope>NUCLEOTIDE SEQUENCE [LARGE SCALE GENOMIC DNA]</scope>
    <source>
        <strain evidence="7">BIOML-A165</strain>
    </source>
</reference>
<reference evidence="11" key="5">
    <citation type="journal article" date="2022" name="Science">
        <title>Cyclic ADP ribose isomers: Production, chemical structures, and immune signaling.</title>
        <authorList>
            <person name="Manik M.K."/>
            <person name="Shi Y."/>
            <person name="Li S."/>
            <person name="Zaydman M.A."/>
            <person name="Damaraju N."/>
            <person name="Eastman S."/>
            <person name="Smith T.G."/>
            <person name="Gu W."/>
            <person name="Masic V."/>
            <person name="Mosaiab T."/>
            <person name="Weagley J.S."/>
            <person name="Hancock S.J."/>
            <person name="Vasquez E."/>
            <person name="Hartley-Tassell L."/>
            <person name="Kargios N."/>
            <person name="Maruta N."/>
            <person name="Lim B.Y.J."/>
            <person name="Burdett H."/>
            <person name="Landsberg M.J."/>
            <person name="Schembri M.A."/>
            <person name="Prokes I."/>
            <person name="Song L."/>
            <person name="Grant M."/>
            <person name="DiAntonio A."/>
            <person name="Nanson J.D."/>
            <person name="Guo M."/>
            <person name="Milbrandt J."/>
            <person name="Ve T."/>
            <person name="Kobe B."/>
        </authorList>
    </citation>
    <scope>X-RAY CRYSTALLOGRAPHY (1.42 ANGSTROMS) OF 156-287</scope>
    <scope>FUNCTION</scope>
    <scope>CATALYTIC ACTIVITY</scope>
    <scope>DOMAIN</scope>
    <scope>MUTAGENESIS OF TRP-226</scope>
    <source>
        <strain>7330</strain>
    </source>
</reference>
<name>BTTIR_BACT4</name>
<organism>
    <name type="scientific">Bacteroides thetaiotaomicron</name>
    <dbReference type="NCBI Taxonomy" id="818"/>
    <lineage>
        <taxon>Bacteria</taxon>
        <taxon>Pseudomonadati</taxon>
        <taxon>Bacteroidota</taxon>
        <taxon>Bacteroidia</taxon>
        <taxon>Bacteroidales</taxon>
        <taxon>Bacteroidaceae</taxon>
        <taxon>Bacteroides</taxon>
    </lineage>
</organism>
<dbReference type="EC" id="3.2.2.-" evidence="2"/>
<dbReference type="EMBL" id="CP012937">
    <property type="protein sequence ID" value="ALJ40209.1"/>
    <property type="molecule type" value="Genomic_DNA"/>
</dbReference>
<dbReference type="EMBL" id="WCSB01000030">
    <property type="protein sequence ID" value="KAB4448357.1"/>
    <property type="molecule type" value="Genomic_DNA"/>
</dbReference>
<dbReference type="EMBL" id="QRUV01000010">
    <property type="protein sequence ID" value="RGR93092.1"/>
    <property type="molecule type" value="Genomic_DNA"/>
</dbReference>
<dbReference type="EMBL" id="QROV01000011">
    <property type="protein sequence ID" value="RHL59207.1"/>
    <property type="molecule type" value="Genomic_DNA"/>
</dbReference>
<dbReference type="EMBL" id="FOAL01000017">
    <property type="protein sequence ID" value="SEM20781.1"/>
    <property type="molecule type" value="Genomic_DNA"/>
</dbReference>
<dbReference type="RefSeq" id="WP_048697596.1">
    <property type="nucleotide sequence ID" value="NZ_VTYW01000009.1"/>
</dbReference>
<dbReference type="PDB" id="7UXR">
    <property type="method" value="X-ray"/>
    <property type="resolution" value="2.16 A"/>
    <property type="chains" value="A/B=156-287"/>
</dbReference>
<dbReference type="PDBsum" id="7UXR"/>
<dbReference type="SMR" id="A0A0P0FGV9"/>
<dbReference type="KEGG" id="btho:Btheta7330_00630"/>
<dbReference type="PATRIC" id="fig|818.23.peg.634"/>
<dbReference type="Proteomes" id="UP000283616">
    <property type="component" value="Unassembled WGS sequence"/>
</dbReference>
<dbReference type="Proteomes" id="UP000460317">
    <property type="component" value="Unassembled WGS sequence"/>
</dbReference>
<dbReference type="GO" id="GO:0016787">
    <property type="term" value="F:hydrolase activity"/>
    <property type="evidence" value="ECO:0007669"/>
    <property type="project" value="UniProtKB-KW"/>
</dbReference>
<dbReference type="GO" id="GO:0007165">
    <property type="term" value="P:signal transduction"/>
    <property type="evidence" value="ECO:0007669"/>
    <property type="project" value="InterPro"/>
</dbReference>
<dbReference type="Gene3D" id="3.40.50.10140">
    <property type="entry name" value="Toll/interleukin-1 receptor homology (TIR) domain"/>
    <property type="match status" value="1"/>
</dbReference>
<dbReference type="InterPro" id="IPR000157">
    <property type="entry name" value="TIR_dom"/>
</dbReference>
<dbReference type="InterPro" id="IPR035897">
    <property type="entry name" value="Toll_tir_struct_dom_sf"/>
</dbReference>
<dbReference type="Pfam" id="PF13676">
    <property type="entry name" value="TIR_2"/>
    <property type="match status" value="1"/>
</dbReference>
<dbReference type="SMART" id="SM00255">
    <property type="entry name" value="TIR"/>
    <property type="match status" value="1"/>
</dbReference>
<dbReference type="SUPFAM" id="SSF52200">
    <property type="entry name" value="Toll/Interleukin receptor TIR domain"/>
    <property type="match status" value="1"/>
</dbReference>
<dbReference type="PROSITE" id="PS50104">
    <property type="entry name" value="TIR"/>
    <property type="match status" value="1"/>
</dbReference>
<accession>A0A0P0FGV9</accession>
<evidence type="ECO:0000255" key="1">
    <source>
        <dbReference type="PROSITE-ProRule" id="PRU00204"/>
    </source>
</evidence>
<evidence type="ECO:0000269" key="2">
    <source>
    </source>
</evidence>
<evidence type="ECO:0000303" key="3">
    <source>
    </source>
</evidence>
<evidence type="ECO:0000305" key="4"/>
<evidence type="ECO:0000305" key="5">
    <source>
    </source>
</evidence>
<evidence type="ECO:0000312" key="6">
    <source>
        <dbReference type="EMBL" id="ALJ40209.1"/>
    </source>
</evidence>
<evidence type="ECO:0000312" key="7">
    <source>
        <dbReference type="EMBL" id="KAB4448357.1"/>
    </source>
</evidence>
<evidence type="ECO:0000312" key="8">
    <source>
        <dbReference type="EMBL" id="RGR93092.1"/>
    </source>
</evidence>
<evidence type="ECO:0000312" key="9">
    <source>
        <dbReference type="EMBL" id="RHL59207.1"/>
    </source>
</evidence>
<evidence type="ECO:0000312" key="10">
    <source>
        <dbReference type="EMBL" id="SEM20781.1"/>
    </source>
</evidence>
<evidence type="ECO:0000312" key="11">
    <source>
        <dbReference type="PDB" id="7UXR"/>
    </source>
</evidence>
<evidence type="ECO:0000312" key="12">
    <source>
        <dbReference type="Proteomes" id="UP000283616"/>
    </source>
</evidence>
<evidence type="ECO:0007829" key="13">
    <source>
        <dbReference type="PDB" id="7UXR"/>
    </source>
</evidence>
<comment type="function">
    <text evidence="2">NAD(+) hydrolase (NADase) that cleaves NAD(+) into nicotinamide and 2' cyclic ADP-D-ribose (2'cADPR) (PubMed:36048923).</text>
</comment>
<comment type="catalytic activity">
    <reaction evidence="2">
        <text>NAD(+) = 2'cADPR + nicotinamide + H(+)</text>
        <dbReference type="Rhea" id="RHEA:75299"/>
        <dbReference type="ChEBI" id="CHEBI:15378"/>
        <dbReference type="ChEBI" id="CHEBI:17154"/>
        <dbReference type="ChEBI" id="CHEBI:57540"/>
        <dbReference type="ChEBI" id="CHEBI:194248"/>
    </reaction>
    <physiologicalReaction direction="left-to-right" evidence="2">
        <dbReference type="Rhea" id="RHEA:75300"/>
    </physiologicalReaction>
</comment>
<comment type="subunit">
    <text evidence="5">Homodimer.</text>
</comment>
<comment type="domain">
    <text evidence="2">The TIR domain alone is active and produces cADPR (residues 134-258). It dimerizes in crystal structures.</text>
</comment>
<protein>
    <recommendedName>
        <fullName evidence="4">2' cyclic ADP-D-ribose synthase BtTIR</fullName>
        <shortName evidence="4">2'cADPR synthase BtTIR</shortName>
        <ecNumber evidence="2">3.2.2.-</ecNumber>
    </recommendedName>
    <alternativeName>
        <fullName evidence="4">NAD(+) hydrolase BtTIR</fullName>
        <shortName evidence="3">BtTir</shortName>
    </alternativeName>
</protein>
<keyword id="KW-0002">3D-structure</keyword>
<keyword id="KW-0378">Hydrolase</keyword>
<keyword id="KW-0520">NAD</keyword>
<gene>
    <name evidence="6" type="ORF">Btheta7330_00630</name>
    <name evidence="9" type="ORF">DW011_11495</name>
    <name evidence="8" type="ORF">DWY18_13615</name>
    <name evidence="7" type="ORF">GAN93_22170</name>
    <name evidence="10" type="ORF">SAMN02910322_04521</name>
</gene>
<sequence length="287" mass="33348">MNSSYYQNQINRLEKDIADLQKKIADENKKEIDKNKQIDSVHRTINKNTSISTLNSKQRQIDGYQKDILNCRTKIASYQKSIATKSAELGKKRQELLKAQQSEQKKLQDDQLKFQKKLQSEIEIQKRHLETLIAQNYSTQNNKLVSTEDIPEPTKQYDFFISHASEDKDDIVRDLAEALRNNGFEVWYDEFELKIGDSLRKKIDYGLSNANYGIVIISPSFVKKNWTEYELNGMVAREMNGHKVILPIWHKITKDEVLRFSPSLADKLALNTSIHTIDDIVENLKNL</sequence>
<proteinExistence type="evidence at protein level"/>
<feature type="chain" id="PRO_0000457983" description="2' cyclic ADP-D-ribose synthase BtTIR">
    <location>
        <begin position="1"/>
        <end position="287"/>
    </location>
</feature>
<feature type="domain" description="TIR" evidence="1 2">
    <location>
        <begin position="155"/>
        <end position="287"/>
    </location>
</feature>
<feature type="active site" evidence="1">
    <location>
        <position position="230"/>
    </location>
</feature>
<feature type="site" description="Important for ADPR cyclization" evidence="2">
    <location>
        <position position="226"/>
    </location>
</feature>
<feature type="mutagenesis site" description="50% 2'cADPR produced, production of ADPR rises." evidence="2">
    <original>W</original>
    <variation>A</variation>
    <location>
        <position position="226"/>
    </location>
</feature>
<feature type="mutagenesis site" description="50% 2'cADPR produced, very little ADPR made." evidence="2">
    <original>W</original>
    <variation>F</variation>
    <location>
        <position position="226"/>
    </location>
</feature>
<feature type="mutagenesis site" description="60% 2-cADPR produced, very little ADPR made." evidence="2">
    <original>W</original>
    <variation>Y</variation>
    <location>
        <position position="226"/>
    </location>
</feature>
<feature type="strand" evidence="13">
    <location>
        <begin position="157"/>
        <end position="164"/>
    </location>
</feature>
<feature type="helix" evidence="13">
    <location>
        <begin position="165"/>
        <end position="167"/>
    </location>
</feature>
<feature type="turn" evidence="13">
    <location>
        <begin position="168"/>
        <end position="170"/>
    </location>
</feature>
<feature type="helix" evidence="13">
    <location>
        <begin position="171"/>
        <end position="181"/>
    </location>
</feature>
<feature type="helix" evidence="13">
    <location>
        <begin position="199"/>
        <end position="208"/>
    </location>
</feature>
<feature type="strand" evidence="13">
    <location>
        <begin position="209"/>
        <end position="217"/>
    </location>
</feature>
<feature type="helix" evidence="13">
    <location>
        <begin position="219"/>
        <end position="222"/>
    </location>
</feature>
<feature type="helix" evidence="13">
    <location>
        <begin position="228"/>
        <end position="235"/>
    </location>
</feature>
<feature type="strand" evidence="13">
    <location>
        <begin position="245"/>
        <end position="249"/>
    </location>
</feature>
<feature type="helix" evidence="13">
    <location>
        <begin position="254"/>
        <end position="260"/>
    </location>
</feature>
<feature type="helix" evidence="13">
    <location>
        <begin position="262"/>
        <end position="264"/>
    </location>
</feature>
<feature type="turn" evidence="13">
    <location>
        <begin position="272"/>
        <end position="274"/>
    </location>
</feature>
<feature type="helix" evidence="13">
    <location>
        <begin position="277"/>
        <end position="287"/>
    </location>
</feature>